<reference key="1">
    <citation type="journal article" date="2009" name="J. Bacteriol.">
        <title>Complete genome sequence of Haemophilus parasuis SH0165.</title>
        <authorList>
            <person name="Yue M."/>
            <person name="Yang F."/>
            <person name="Yang J."/>
            <person name="Bei W."/>
            <person name="Cai X."/>
            <person name="Chen L."/>
            <person name="Dong J."/>
            <person name="Zhou R."/>
            <person name="Jin M."/>
            <person name="Jin Q."/>
            <person name="Chen H."/>
        </authorList>
    </citation>
    <scope>NUCLEOTIDE SEQUENCE [LARGE SCALE GENOMIC DNA]</scope>
    <source>
        <strain>SH0165</strain>
    </source>
</reference>
<organism>
    <name type="scientific">Glaesserella parasuis serovar 5 (strain SH0165)</name>
    <name type="common">Haemophilus parasuis</name>
    <dbReference type="NCBI Taxonomy" id="557723"/>
    <lineage>
        <taxon>Bacteria</taxon>
        <taxon>Pseudomonadati</taxon>
        <taxon>Pseudomonadota</taxon>
        <taxon>Gammaproteobacteria</taxon>
        <taxon>Pasteurellales</taxon>
        <taxon>Pasteurellaceae</taxon>
        <taxon>Glaesserella</taxon>
    </lineage>
</organism>
<name>SSTT_GLAP5</name>
<evidence type="ECO:0000255" key="1">
    <source>
        <dbReference type="HAMAP-Rule" id="MF_01582"/>
    </source>
</evidence>
<feature type="chain" id="PRO_1000185653" description="Serine/threonine transporter SstT">
    <location>
        <begin position="1"/>
        <end position="404"/>
    </location>
</feature>
<feature type="transmembrane region" description="Helical" evidence="1">
    <location>
        <begin position="10"/>
        <end position="30"/>
    </location>
</feature>
<feature type="transmembrane region" description="Helical" evidence="1">
    <location>
        <begin position="53"/>
        <end position="73"/>
    </location>
</feature>
<feature type="transmembrane region" description="Helical" evidence="1">
    <location>
        <begin position="81"/>
        <end position="101"/>
    </location>
</feature>
<feature type="transmembrane region" description="Helical" evidence="1">
    <location>
        <begin position="140"/>
        <end position="160"/>
    </location>
</feature>
<feature type="transmembrane region" description="Helical" evidence="1">
    <location>
        <begin position="177"/>
        <end position="197"/>
    </location>
</feature>
<feature type="transmembrane region" description="Helical" evidence="1">
    <location>
        <begin position="215"/>
        <end position="235"/>
    </location>
</feature>
<feature type="transmembrane region" description="Helical" evidence="1">
    <location>
        <begin position="287"/>
        <end position="307"/>
    </location>
</feature>
<feature type="transmembrane region" description="Helical" evidence="1">
    <location>
        <begin position="329"/>
        <end position="349"/>
    </location>
</feature>
<keyword id="KW-0029">Amino-acid transport</keyword>
<keyword id="KW-0997">Cell inner membrane</keyword>
<keyword id="KW-1003">Cell membrane</keyword>
<keyword id="KW-0472">Membrane</keyword>
<keyword id="KW-1185">Reference proteome</keyword>
<keyword id="KW-0769">Symport</keyword>
<keyword id="KW-0812">Transmembrane</keyword>
<keyword id="KW-1133">Transmembrane helix</keyword>
<keyword id="KW-0813">Transport</keyword>
<accession>B8F3C3</accession>
<proteinExistence type="inferred from homology"/>
<gene>
    <name evidence="1" type="primary">sstT</name>
    <name type="ordered locus">HAPS_0126</name>
</gene>
<comment type="function">
    <text evidence="1">Involved in the import of serine and threonine into the cell, with the concomitant import of sodium (symport system).</text>
</comment>
<comment type="catalytic activity">
    <reaction evidence="1">
        <text>L-serine(in) + Na(+)(in) = L-serine(out) + Na(+)(out)</text>
        <dbReference type="Rhea" id="RHEA:29575"/>
        <dbReference type="ChEBI" id="CHEBI:29101"/>
        <dbReference type="ChEBI" id="CHEBI:33384"/>
    </reaction>
    <physiologicalReaction direction="right-to-left" evidence="1">
        <dbReference type="Rhea" id="RHEA:29577"/>
    </physiologicalReaction>
</comment>
<comment type="catalytic activity">
    <reaction evidence="1">
        <text>L-threonine(in) + Na(+)(in) = L-threonine(out) + Na(+)(out)</text>
        <dbReference type="Rhea" id="RHEA:69999"/>
        <dbReference type="ChEBI" id="CHEBI:29101"/>
        <dbReference type="ChEBI" id="CHEBI:57926"/>
    </reaction>
    <physiologicalReaction direction="right-to-left" evidence="1">
        <dbReference type="Rhea" id="RHEA:70001"/>
    </physiologicalReaction>
</comment>
<comment type="subcellular location">
    <subcellularLocation>
        <location evidence="1">Cell inner membrane</location>
        <topology evidence="1">Multi-pass membrane protein</topology>
    </subcellularLocation>
</comment>
<comment type="similarity">
    <text evidence="1">Belongs to the dicarboxylate/amino acid:cation symporter (DAACS) (TC 2.A.23) family.</text>
</comment>
<sequence>MSNQSLSSKILGGNLVLRIAVGLVLGICLALVSPDAAKSVGVLGQFFVKSLRAIAPILVFVLVMASIANKEVGSDSRLKPILVMYVLGTFVAAVTAVILSYLFPTTLELVTSPEGLAPPQGVGEVLKTVVFNLVDNPLGAITNGNFIGILAWSIGLGIALRHAAPSTKVMLNDISDAVSFVVKVVIAFAPIGVFGLVAETMATNGADAFIGYARLLAVLLGAMAIVAFILNPLLVYWKIRRNPYPLTITCLRESGVTAFFTRSSAANIPVNMGLAKRLGIKEEIYSIAIPLGANINMAGAAITITVLTLAAAYTQGIVPDFSTAVLLSIVASICACGASGVAGGSLLLIPLACSLFNIPNDVAAQVIGVGFIIGVIQDSAETALNSSTDVLFTAAVSMSDEKNN</sequence>
<dbReference type="EMBL" id="CP001321">
    <property type="protein sequence ID" value="ACL31825.1"/>
    <property type="molecule type" value="Genomic_DNA"/>
</dbReference>
<dbReference type="RefSeq" id="WP_012621567.1">
    <property type="nucleotide sequence ID" value="NC_011852.1"/>
</dbReference>
<dbReference type="SMR" id="B8F3C3"/>
<dbReference type="STRING" id="557723.HAPS_0126"/>
<dbReference type="GeneID" id="66618519"/>
<dbReference type="KEGG" id="hap:HAPS_0126"/>
<dbReference type="PATRIC" id="fig|557723.8.peg.131"/>
<dbReference type="HOGENOM" id="CLU_044581_0_0_6"/>
<dbReference type="Proteomes" id="UP000006743">
    <property type="component" value="Chromosome"/>
</dbReference>
<dbReference type="GO" id="GO:0005886">
    <property type="term" value="C:plasma membrane"/>
    <property type="evidence" value="ECO:0007669"/>
    <property type="project" value="UniProtKB-SubCell"/>
</dbReference>
<dbReference type="GO" id="GO:0005295">
    <property type="term" value="F:neutral L-amino acid:sodium symporter activity"/>
    <property type="evidence" value="ECO:0007669"/>
    <property type="project" value="TreeGrafter"/>
</dbReference>
<dbReference type="GO" id="GO:0032329">
    <property type="term" value="P:serine transport"/>
    <property type="evidence" value="ECO:0007669"/>
    <property type="project" value="InterPro"/>
</dbReference>
<dbReference type="GO" id="GO:0015826">
    <property type="term" value="P:threonine transport"/>
    <property type="evidence" value="ECO:0007669"/>
    <property type="project" value="InterPro"/>
</dbReference>
<dbReference type="FunFam" id="1.10.3860.10:FF:000003">
    <property type="entry name" value="Serine/threonine transporter sstT"/>
    <property type="match status" value="1"/>
</dbReference>
<dbReference type="Gene3D" id="1.10.3860.10">
    <property type="entry name" value="Sodium:dicarboxylate symporter"/>
    <property type="match status" value="1"/>
</dbReference>
<dbReference type="HAMAP" id="MF_01582">
    <property type="entry name" value="Ser_Thr_transp_SstT"/>
    <property type="match status" value="1"/>
</dbReference>
<dbReference type="InterPro" id="IPR001991">
    <property type="entry name" value="Na-dicarboxylate_symporter"/>
</dbReference>
<dbReference type="InterPro" id="IPR036458">
    <property type="entry name" value="Na:dicarbo_symporter_sf"/>
</dbReference>
<dbReference type="InterPro" id="IPR023025">
    <property type="entry name" value="Ser_Thr_transp_SstT"/>
</dbReference>
<dbReference type="NCBIfam" id="NF010151">
    <property type="entry name" value="PRK13628.1"/>
    <property type="match status" value="1"/>
</dbReference>
<dbReference type="PANTHER" id="PTHR42865">
    <property type="entry name" value="PROTON/GLUTAMATE-ASPARTATE SYMPORTER"/>
    <property type="match status" value="1"/>
</dbReference>
<dbReference type="PANTHER" id="PTHR42865:SF8">
    <property type="entry name" value="SERINE_THREONINE TRANSPORTER SSTT"/>
    <property type="match status" value="1"/>
</dbReference>
<dbReference type="Pfam" id="PF00375">
    <property type="entry name" value="SDF"/>
    <property type="match status" value="1"/>
</dbReference>
<dbReference type="PRINTS" id="PR00173">
    <property type="entry name" value="EDTRNSPORT"/>
</dbReference>
<dbReference type="SUPFAM" id="SSF118215">
    <property type="entry name" value="Proton glutamate symport protein"/>
    <property type="match status" value="1"/>
</dbReference>
<protein>
    <recommendedName>
        <fullName evidence="1">Serine/threonine transporter SstT</fullName>
    </recommendedName>
    <alternativeName>
        <fullName evidence="1">Na(+)/serine-threonine symporter</fullName>
    </alternativeName>
</protein>